<gene>
    <name evidence="2" type="primary">tuf1</name>
    <name type="ordered locus">SRU_1033</name>
</gene>
<gene>
    <name evidence="2" type="primary">tuf2</name>
    <name type="ordered locus">SRU_1766</name>
</gene>
<feature type="chain" id="PRO_0000337511" description="Elongation factor Tu">
    <location>
        <begin position="1"/>
        <end position="396"/>
    </location>
</feature>
<feature type="domain" description="tr-type G">
    <location>
        <begin position="10"/>
        <end position="205"/>
    </location>
</feature>
<feature type="region of interest" description="G1" evidence="1">
    <location>
        <begin position="19"/>
        <end position="26"/>
    </location>
</feature>
<feature type="region of interest" description="G2" evidence="1">
    <location>
        <begin position="61"/>
        <end position="65"/>
    </location>
</feature>
<feature type="region of interest" description="G3" evidence="1">
    <location>
        <begin position="82"/>
        <end position="85"/>
    </location>
</feature>
<feature type="region of interest" description="G4" evidence="1">
    <location>
        <begin position="137"/>
        <end position="140"/>
    </location>
</feature>
<feature type="region of interest" description="G5" evidence="1">
    <location>
        <begin position="175"/>
        <end position="177"/>
    </location>
</feature>
<feature type="binding site" evidence="2">
    <location>
        <begin position="19"/>
        <end position="26"/>
    </location>
    <ligand>
        <name>GTP</name>
        <dbReference type="ChEBI" id="CHEBI:37565"/>
    </ligand>
</feature>
<feature type="binding site" evidence="2">
    <location>
        <position position="26"/>
    </location>
    <ligand>
        <name>Mg(2+)</name>
        <dbReference type="ChEBI" id="CHEBI:18420"/>
    </ligand>
</feature>
<feature type="binding site" evidence="2">
    <location>
        <begin position="82"/>
        <end position="86"/>
    </location>
    <ligand>
        <name>GTP</name>
        <dbReference type="ChEBI" id="CHEBI:37565"/>
    </ligand>
</feature>
<feature type="binding site" evidence="2">
    <location>
        <begin position="137"/>
        <end position="140"/>
    </location>
    <ligand>
        <name>GTP</name>
        <dbReference type="ChEBI" id="CHEBI:37565"/>
    </ligand>
</feature>
<name>EFTU_SALRD</name>
<sequence>MAKEEFAREKPHVNVGTIGHVDHGKTTLTAAITKVLAERVGGAAEQTFEAIDNAPEERERGITIATSHVEYETENRHYAHVDCPGHADYVKNMVTGAAQMDGAILVVGSDDGPMPQTREHILLARQVGVPYLVVFMNKTDLVDDAELLELVEMEVRELLTEYEFPGDEVPVVRGSALQALESSEEHEEKIMELMEAVDEYIPTPERDVEKPFLMPVEDIFSITGRGTVVTGRIERGRVQLQDEIEIVGMQEEKMDSVVTGIEMFNKTLEEGEAGDNAGILLRGIEKEEVKRGMVLAEPGTVTPHKEFECEVYVLSKEEGGRHTPFFDGYQPQFYFRTTDVTGSIELPEGVEMVMPGDNATFEGSLIEPVALEEGLRFAIREGGHTVGAGVVTDILD</sequence>
<protein>
    <recommendedName>
        <fullName evidence="2">Elongation factor Tu</fullName>
        <shortName evidence="2">EF-Tu</shortName>
        <ecNumber evidence="2">3.6.5.3</ecNumber>
    </recommendedName>
</protein>
<dbReference type="EC" id="3.6.5.3" evidence="2"/>
<dbReference type="EMBL" id="CP000159">
    <property type="protein sequence ID" value="ABC44165.1"/>
    <property type="molecule type" value="Genomic_DNA"/>
</dbReference>
<dbReference type="EMBL" id="CP000159">
    <property type="protein sequence ID" value="ABC44502.1"/>
    <property type="molecule type" value="Genomic_DNA"/>
</dbReference>
<dbReference type="RefSeq" id="YP_445165.1">
    <property type="nucleotide sequence ID" value="NC_007677.1"/>
</dbReference>
<dbReference type="RefSeq" id="YP_445883.1">
    <property type="nucleotide sequence ID" value="NC_007677.1"/>
</dbReference>
<dbReference type="SMR" id="Q2S1P8"/>
<dbReference type="STRING" id="309807.SRU_1033"/>
<dbReference type="EnsemblBacteria" id="ABC44165">
    <property type="protein sequence ID" value="ABC44165"/>
    <property type="gene ID" value="SRU_1766"/>
</dbReference>
<dbReference type="EnsemblBacteria" id="ABC44502">
    <property type="protein sequence ID" value="ABC44502"/>
    <property type="gene ID" value="SRU_1033"/>
</dbReference>
<dbReference type="KEGG" id="sru:SRU_1033"/>
<dbReference type="KEGG" id="sru:SRU_1766"/>
<dbReference type="PATRIC" id="fig|309807.25.peg.1071"/>
<dbReference type="eggNOG" id="COG0050">
    <property type="taxonomic scope" value="Bacteria"/>
</dbReference>
<dbReference type="HOGENOM" id="CLU_007265_0_1_10"/>
<dbReference type="OrthoDB" id="9804504at2"/>
<dbReference type="Proteomes" id="UP000008674">
    <property type="component" value="Chromosome"/>
</dbReference>
<dbReference type="GO" id="GO:0005829">
    <property type="term" value="C:cytosol"/>
    <property type="evidence" value="ECO:0007669"/>
    <property type="project" value="TreeGrafter"/>
</dbReference>
<dbReference type="GO" id="GO:0005525">
    <property type="term" value="F:GTP binding"/>
    <property type="evidence" value="ECO:0007669"/>
    <property type="project" value="UniProtKB-UniRule"/>
</dbReference>
<dbReference type="GO" id="GO:0003924">
    <property type="term" value="F:GTPase activity"/>
    <property type="evidence" value="ECO:0007669"/>
    <property type="project" value="InterPro"/>
</dbReference>
<dbReference type="GO" id="GO:0003746">
    <property type="term" value="F:translation elongation factor activity"/>
    <property type="evidence" value="ECO:0007669"/>
    <property type="project" value="UniProtKB-UniRule"/>
</dbReference>
<dbReference type="CDD" id="cd01884">
    <property type="entry name" value="EF_Tu"/>
    <property type="match status" value="1"/>
</dbReference>
<dbReference type="CDD" id="cd03697">
    <property type="entry name" value="EFTU_II"/>
    <property type="match status" value="1"/>
</dbReference>
<dbReference type="CDD" id="cd03707">
    <property type="entry name" value="EFTU_III"/>
    <property type="match status" value="1"/>
</dbReference>
<dbReference type="FunFam" id="2.40.30.10:FF:000001">
    <property type="entry name" value="Elongation factor Tu"/>
    <property type="match status" value="1"/>
</dbReference>
<dbReference type="FunFam" id="3.40.50.300:FF:000003">
    <property type="entry name" value="Elongation factor Tu"/>
    <property type="match status" value="1"/>
</dbReference>
<dbReference type="Gene3D" id="3.40.50.300">
    <property type="entry name" value="P-loop containing nucleotide triphosphate hydrolases"/>
    <property type="match status" value="1"/>
</dbReference>
<dbReference type="Gene3D" id="2.40.30.10">
    <property type="entry name" value="Translation factors"/>
    <property type="match status" value="2"/>
</dbReference>
<dbReference type="HAMAP" id="MF_00118_B">
    <property type="entry name" value="EF_Tu_B"/>
    <property type="match status" value="1"/>
</dbReference>
<dbReference type="InterPro" id="IPR041709">
    <property type="entry name" value="EF-Tu_GTP-bd"/>
</dbReference>
<dbReference type="InterPro" id="IPR050055">
    <property type="entry name" value="EF-Tu_GTPase"/>
</dbReference>
<dbReference type="InterPro" id="IPR004161">
    <property type="entry name" value="EFTu-like_2"/>
</dbReference>
<dbReference type="InterPro" id="IPR033720">
    <property type="entry name" value="EFTU_2"/>
</dbReference>
<dbReference type="InterPro" id="IPR031157">
    <property type="entry name" value="G_TR_CS"/>
</dbReference>
<dbReference type="InterPro" id="IPR027417">
    <property type="entry name" value="P-loop_NTPase"/>
</dbReference>
<dbReference type="InterPro" id="IPR005225">
    <property type="entry name" value="Small_GTP-bd"/>
</dbReference>
<dbReference type="InterPro" id="IPR000795">
    <property type="entry name" value="T_Tr_GTP-bd_dom"/>
</dbReference>
<dbReference type="InterPro" id="IPR009000">
    <property type="entry name" value="Transl_B-barrel_sf"/>
</dbReference>
<dbReference type="InterPro" id="IPR009001">
    <property type="entry name" value="Transl_elong_EF1A/Init_IF2_C"/>
</dbReference>
<dbReference type="InterPro" id="IPR004541">
    <property type="entry name" value="Transl_elong_EFTu/EF1A_bac/org"/>
</dbReference>
<dbReference type="InterPro" id="IPR004160">
    <property type="entry name" value="Transl_elong_EFTu/EF1A_C"/>
</dbReference>
<dbReference type="NCBIfam" id="TIGR00485">
    <property type="entry name" value="EF-Tu"/>
    <property type="match status" value="1"/>
</dbReference>
<dbReference type="NCBIfam" id="NF000766">
    <property type="entry name" value="PRK00049.1"/>
    <property type="match status" value="1"/>
</dbReference>
<dbReference type="NCBIfam" id="NF009372">
    <property type="entry name" value="PRK12735.1"/>
    <property type="match status" value="1"/>
</dbReference>
<dbReference type="NCBIfam" id="NF009373">
    <property type="entry name" value="PRK12736.1"/>
    <property type="match status" value="1"/>
</dbReference>
<dbReference type="NCBIfam" id="TIGR00231">
    <property type="entry name" value="small_GTP"/>
    <property type="match status" value="1"/>
</dbReference>
<dbReference type="PANTHER" id="PTHR43721:SF22">
    <property type="entry name" value="ELONGATION FACTOR TU, MITOCHONDRIAL"/>
    <property type="match status" value="1"/>
</dbReference>
<dbReference type="PANTHER" id="PTHR43721">
    <property type="entry name" value="ELONGATION FACTOR TU-RELATED"/>
    <property type="match status" value="1"/>
</dbReference>
<dbReference type="Pfam" id="PF00009">
    <property type="entry name" value="GTP_EFTU"/>
    <property type="match status" value="1"/>
</dbReference>
<dbReference type="Pfam" id="PF03144">
    <property type="entry name" value="GTP_EFTU_D2"/>
    <property type="match status" value="1"/>
</dbReference>
<dbReference type="Pfam" id="PF03143">
    <property type="entry name" value="GTP_EFTU_D3"/>
    <property type="match status" value="1"/>
</dbReference>
<dbReference type="PRINTS" id="PR00315">
    <property type="entry name" value="ELONGATNFCT"/>
</dbReference>
<dbReference type="SUPFAM" id="SSF50465">
    <property type="entry name" value="EF-Tu/eEF-1alpha/eIF2-gamma C-terminal domain"/>
    <property type="match status" value="1"/>
</dbReference>
<dbReference type="SUPFAM" id="SSF52540">
    <property type="entry name" value="P-loop containing nucleoside triphosphate hydrolases"/>
    <property type="match status" value="1"/>
</dbReference>
<dbReference type="SUPFAM" id="SSF50447">
    <property type="entry name" value="Translation proteins"/>
    <property type="match status" value="1"/>
</dbReference>
<dbReference type="PROSITE" id="PS00301">
    <property type="entry name" value="G_TR_1"/>
    <property type="match status" value="1"/>
</dbReference>
<dbReference type="PROSITE" id="PS51722">
    <property type="entry name" value="G_TR_2"/>
    <property type="match status" value="1"/>
</dbReference>
<evidence type="ECO:0000250" key="1"/>
<evidence type="ECO:0000255" key="2">
    <source>
        <dbReference type="HAMAP-Rule" id="MF_00118"/>
    </source>
</evidence>
<reference key="1">
    <citation type="journal article" date="2005" name="Proc. Natl. Acad. Sci. U.S.A.">
        <title>The genome of Salinibacter ruber: convergence and gene exchange among hyperhalophilic bacteria and archaea.</title>
        <authorList>
            <person name="Mongodin E.F."/>
            <person name="Nelson K.E."/>
            <person name="Daugherty S."/>
            <person name="DeBoy R.T."/>
            <person name="Wister J."/>
            <person name="Khouri H."/>
            <person name="Weidman J."/>
            <person name="Walsh D.A."/>
            <person name="Papke R.T."/>
            <person name="Sanchez Perez G."/>
            <person name="Sharma A.K."/>
            <person name="Nesbo C.L."/>
            <person name="MacLeod D."/>
            <person name="Bapteste E."/>
            <person name="Doolittle W.F."/>
            <person name="Charlebois R.L."/>
            <person name="Legault B."/>
            <person name="Rodriguez-Valera F."/>
        </authorList>
    </citation>
    <scope>NUCLEOTIDE SEQUENCE [LARGE SCALE GENOMIC DNA]</scope>
    <source>
        <strain>DSM 13855 / CECT 5946 / M31</strain>
    </source>
</reference>
<keyword id="KW-0963">Cytoplasm</keyword>
<keyword id="KW-0251">Elongation factor</keyword>
<keyword id="KW-0342">GTP-binding</keyword>
<keyword id="KW-0378">Hydrolase</keyword>
<keyword id="KW-0460">Magnesium</keyword>
<keyword id="KW-0479">Metal-binding</keyword>
<keyword id="KW-0547">Nucleotide-binding</keyword>
<keyword id="KW-0648">Protein biosynthesis</keyword>
<keyword id="KW-1185">Reference proteome</keyword>
<proteinExistence type="inferred from homology"/>
<organism>
    <name type="scientific">Salinibacter ruber (strain DSM 13855 / M31)</name>
    <dbReference type="NCBI Taxonomy" id="309807"/>
    <lineage>
        <taxon>Bacteria</taxon>
        <taxon>Pseudomonadati</taxon>
        <taxon>Rhodothermota</taxon>
        <taxon>Rhodothermia</taxon>
        <taxon>Rhodothermales</taxon>
        <taxon>Salinibacteraceae</taxon>
        <taxon>Salinibacter</taxon>
    </lineage>
</organism>
<accession>Q2S1P8</accession>
<comment type="function">
    <text evidence="2">GTP hydrolase that promotes the GTP-dependent binding of aminoacyl-tRNA to the A-site of ribosomes during protein biosynthesis.</text>
</comment>
<comment type="catalytic activity">
    <reaction evidence="2">
        <text>GTP + H2O = GDP + phosphate + H(+)</text>
        <dbReference type="Rhea" id="RHEA:19669"/>
        <dbReference type="ChEBI" id="CHEBI:15377"/>
        <dbReference type="ChEBI" id="CHEBI:15378"/>
        <dbReference type="ChEBI" id="CHEBI:37565"/>
        <dbReference type="ChEBI" id="CHEBI:43474"/>
        <dbReference type="ChEBI" id="CHEBI:58189"/>
        <dbReference type="EC" id="3.6.5.3"/>
    </reaction>
    <physiologicalReaction direction="left-to-right" evidence="2">
        <dbReference type="Rhea" id="RHEA:19670"/>
    </physiologicalReaction>
</comment>
<comment type="subunit">
    <text evidence="2">Monomer.</text>
</comment>
<comment type="subcellular location">
    <subcellularLocation>
        <location evidence="2">Cytoplasm</location>
    </subcellularLocation>
</comment>
<comment type="similarity">
    <text evidence="2">Belongs to the TRAFAC class translation factor GTPase superfamily. Classic translation factor GTPase family. EF-Tu/EF-1A subfamily.</text>
</comment>